<dbReference type="EC" id="3.4.21.-"/>
<dbReference type="EMBL" id="AC092117">
    <property type="status" value="NOT_ANNOTATED_CDS"/>
    <property type="molecule type" value="Genomic_DNA"/>
</dbReference>
<dbReference type="EMBL" id="BN000124">
    <property type="protein sequence ID" value="CAD67575.1"/>
    <property type="molecule type" value="mRNA"/>
</dbReference>
<dbReference type="RefSeq" id="NP_001128558.1">
    <property type="nucleotide sequence ID" value="NM_001135086.1"/>
</dbReference>
<dbReference type="RefSeq" id="NP_001341515.2">
    <property type="nucleotide sequence ID" value="NM_001354586.3"/>
</dbReference>
<dbReference type="SMR" id="Q7RTY9"/>
<dbReference type="BioGRID" id="131864">
    <property type="interactions" value="2"/>
</dbReference>
<dbReference type="FunCoup" id="Q7RTY9">
    <property type="interactions" value="87"/>
</dbReference>
<dbReference type="IntAct" id="Q7RTY9">
    <property type="interactions" value="2"/>
</dbReference>
<dbReference type="STRING" id="9606.ENSP00000492058"/>
<dbReference type="MEROPS" id="S01.327"/>
<dbReference type="GlyCosmos" id="Q7RTY9">
    <property type="glycosylation" value="3 sites, 2 glycans"/>
</dbReference>
<dbReference type="GlyGen" id="Q7RTY9">
    <property type="glycosylation" value="3 sites, 2 O-linked glycans (1 site)"/>
</dbReference>
<dbReference type="iPTMnet" id="Q7RTY9"/>
<dbReference type="PhosphoSitePlus" id="Q7RTY9"/>
<dbReference type="BioMuta" id="PRSS41"/>
<dbReference type="DMDM" id="74759056"/>
<dbReference type="jPOST" id="Q7RTY9"/>
<dbReference type="MassIVE" id="Q7RTY9"/>
<dbReference type="Antibodypedia" id="78183">
    <property type="antibodies" value="12 antibodies from 5 providers"/>
</dbReference>
<dbReference type="GeneID" id="360226"/>
<dbReference type="AGR" id="HGNC:30715"/>
<dbReference type="GeneCards" id="PRSS41"/>
<dbReference type="HGNC" id="HGNC:30715">
    <property type="gene designation" value="PRSS41"/>
</dbReference>
<dbReference type="neXtProt" id="NX_Q7RTY9"/>
<dbReference type="PharmGKB" id="PA165450634"/>
<dbReference type="VEuPathDB" id="HostDB:ENSG00000215148"/>
<dbReference type="InParanoid" id="Q7RTY9"/>
<dbReference type="OrthoDB" id="93664at2759"/>
<dbReference type="PAN-GO" id="Q7RTY9">
    <property type="GO annotations" value="1 GO annotation based on evolutionary models"/>
</dbReference>
<dbReference type="PhylomeDB" id="Q7RTY9"/>
<dbReference type="PathwayCommons" id="Q7RTY9"/>
<dbReference type="Reactome" id="R-HSA-163125">
    <property type="pathway name" value="Post-translational modification: synthesis of GPI-anchored proteins"/>
</dbReference>
<dbReference type="SignaLink" id="Q7RTY9"/>
<dbReference type="BioGRID-ORCS" id="360226">
    <property type="hits" value="1 hit in 168 CRISPR screens"/>
</dbReference>
<dbReference type="GenomeRNAi" id="360226"/>
<dbReference type="Pharos" id="Q7RTY9">
    <property type="development level" value="Tdark"/>
</dbReference>
<dbReference type="PRO" id="PR:Q7RTY9"/>
<dbReference type="Proteomes" id="UP000005640">
    <property type="component" value="Chromosome 16"/>
</dbReference>
<dbReference type="RNAct" id="Q7RTY9">
    <property type="molecule type" value="protein"/>
</dbReference>
<dbReference type="GO" id="GO:0005576">
    <property type="term" value="C:extracellular region"/>
    <property type="evidence" value="ECO:0000304"/>
    <property type="project" value="Reactome"/>
</dbReference>
<dbReference type="GO" id="GO:0043229">
    <property type="term" value="C:intracellular organelle"/>
    <property type="evidence" value="ECO:0000250"/>
    <property type="project" value="UniProtKB"/>
</dbReference>
<dbReference type="GO" id="GO:0005886">
    <property type="term" value="C:plasma membrane"/>
    <property type="evidence" value="ECO:0000250"/>
    <property type="project" value="UniProtKB"/>
</dbReference>
<dbReference type="GO" id="GO:0098552">
    <property type="term" value="C:side of membrane"/>
    <property type="evidence" value="ECO:0007669"/>
    <property type="project" value="UniProtKB-KW"/>
</dbReference>
<dbReference type="GO" id="GO:0004252">
    <property type="term" value="F:serine-type endopeptidase activity"/>
    <property type="evidence" value="ECO:0007669"/>
    <property type="project" value="InterPro"/>
</dbReference>
<dbReference type="GO" id="GO:0006508">
    <property type="term" value="P:proteolysis"/>
    <property type="evidence" value="ECO:0007669"/>
    <property type="project" value="UniProtKB-KW"/>
</dbReference>
<dbReference type="CDD" id="cd00190">
    <property type="entry name" value="Tryp_SPc"/>
    <property type="match status" value="1"/>
</dbReference>
<dbReference type="FunFam" id="2.40.10.10:FF:000024">
    <property type="entry name" value="Serine protease 53"/>
    <property type="match status" value="1"/>
</dbReference>
<dbReference type="Gene3D" id="2.40.10.10">
    <property type="entry name" value="Trypsin-like serine proteases"/>
    <property type="match status" value="1"/>
</dbReference>
<dbReference type="InterPro" id="IPR009003">
    <property type="entry name" value="Peptidase_S1_PA"/>
</dbReference>
<dbReference type="InterPro" id="IPR043504">
    <property type="entry name" value="Peptidase_S1_PA_chymotrypsin"/>
</dbReference>
<dbReference type="InterPro" id="IPR001314">
    <property type="entry name" value="Peptidase_S1A"/>
</dbReference>
<dbReference type="InterPro" id="IPR001254">
    <property type="entry name" value="Trypsin_dom"/>
</dbReference>
<dbReference type="InterPro" id="IPR018114">
    <property type="entry name" value="TRYPSIN_HIS"/>
</dbReference>
<dbReference type="InterPro" id="IPR033116">
    <property type="entry name" value="TRYPSIN_SER"/>
</dbReference>
<dbReference type="PANTHER" id="PTHR24252">
    <property type="entry name" value="ACROSIN-RELATED"/>
    <property type="match status" value="1"/>
</dbReference>
<dbReference type="PANTHER" id="PTHR24252:SF17">
    <property type="entry name" value="SUPPRESSOR OF TUMORIGENICITY 14 PROTEIN HOMOLOG-RELATED"/>
    <property type="match status" value="1"/>
</dbReference>
<dbReference type="Pfam" id="PF00089">
    <property type="entry name" value="Trypsin"/>
    <property type="match status" value="1"/>
</dbReference>
<dbReference type="PRINTS" id="PR00722">
    <property type="entry name" value="CHYMOTRYPSIN"/>
</dbReference>
<dbReference type="SMART" id="SM00020">
    <property type="entry name" value="Tryp_SPc"/>
    <property type="match status" value="1"/>
</dbReference>
<dbReference type="SUPFAM" id="SSF50494">
    <property type="entry name" value="Trypsin-like serine proteases"/>
    <property type="match status" value="1"/>
</dbReference>
<dbReference type="PROSITE" id="PS50240">
    <property type="entry name" value="TRYPSIN_DOM"/>
    <property type="match status" value="1"/>
</dbReference>
<dbReference type="PROSITE" id="PS00134">
    <property type="entry name" value="TRYPSIN_HIS"/>
    <property type="match status" value="1"/>
</dbReference>
<dbReference type="PROSITE" id="PS00135">
    <property type="entry name" value="TRYPSIN_SER"/>
    <property type="match status" value="1"/>
</dbReference>
<gene>
    <name evidence="5" type="primary">PRSS41</name>
    <name type="synonym">TESSP1</name>
</gene>
<evidence type="ECO:0000250" key="1"/>
<evidence type="ECO:0000255" key="2"/>
<evidence type="ECO:0000255" key="3">
    <source>
        <dbReference type="PROSITE-ProRule" id="PRU00274"/>
    </source>
</evidence>
<evidence type="ECO:0000269" key="4">
    <source>
    </source>
</evidence>
<evidence type="ECO:0000312" key="5">
    <source>
        <dbReference type="HGNC" id="HGNC:30715"/>
    </source>
</evidence>
<protein>
    <recommendedName>
        <fullName>Serine protease 41</fullName>
        <ecNumber>3.4.21.-</ecNumber>
    </recommendedName>
    <alternativeName>
        <fullName>Testis serine protease 1</fullName>
        <shortName>TESSP-1</shortName>
    </alternativeName>
</protein>
<accession>Q7RTY9</accession>
<keyword id="KW-1003">Cell membrane</keyword>
<keyword id="KW-1015">Disulfide bond</keyword>
<keyword id="KW-0325">Glycoprotein</keyword>
<keyword id="KW-0336">GPI-anchor</keyword>
<keyword id="KW-0378">Hydrolase</keyword>
<keyword id="KW-0449">Lipoprotein</keyword>
<keyword id="KW-0472">Membrane</keyword>
<keyword id="KW-0645">Protease</keyword>
<keyword id="KW-1267">Proteomics identification</keyword>
<keyword id="KW-1185">Reference proteome</keyword>
<keyword id="KW-0720">Serine protease</keyword>
<keyword id="KW-0732">Signal</keyword>
<name>PRS41_HUMAN</name>
<sequence>MGARGALLLALLLARAGLGKPGELGALQAGPGAARRPGGGGREEACGHREIHALVAGGVESARGRWPWQASLRLRRRHRCGGSLLSRRWVLSAAHCFQKHYYPSEWTVQLGELTSRPTPWNLRAYSSRYKVQDIIVNPDALGVLRNDIALLRLASSVTYNAYIQPICIESSTFNFVHRPDCWVTGWGLISPSGTPLPPPYNLREAQVTILNNTRCNYLFEQPSSRSMIWDSMFCAGAEDGSVDTCKGDSGGPLVCDKDGLWYQVGIVSWGMDCGQPNRPGVYTNISVYFHWIRRVMSHSTPRPNPSQLLLLLALLWAP</sequence>
<comment type="subcellular location">
    <subcellularLocation>
        <location>Cell membrane</location>
        <topology>Lipid-anchor</topology>
        <topology>GPI-anchor</topology>
    </subcellularLocation>
    <text evidence="1">Localized in the plasma membrane of spermatogonia. Localized in intracellular compartment in spermatocytes, probably in the Golgi apparatus (By similarity).</text>
</comment>
<comment type="PTM">
    <text evidence="1">N-glycosylated.</text>
</comment>
<comment type="similarity">
    <text evidence="3">Belongs to the peptidase S1 family.</text>
</comment>
<reference key="1">
    <citation type="journal article" date="2004" name="Nature">
        <title>The sequence and analysis of duplication-rich human chromosome 16.</title>
        <authorList>
            <person name="Martin J."/>
            <person name="Han C."/>
            <person name="Gordon L.A."/>
            <person name="Terry A."/>
            <person name="Prabhakar S."/>
            <person name="She X."/>
            <person name="Xie G."/>
            <person name="Hellsten U."/>
            <person name="Chan Y.M."/>
            <person name="Altherr M."/>
            <person name="Couronne O."/>
            <person name="Aerts A."/>
            <person name="Bajorek E."/>
            <person name="Black S."/>
            <person name="Blumer H."/>
            <person name="Branscomb E."/>
            <person name="Brown N.C."/>
            <person name="Bruno W.J."/>
            <person name="Buckingham J.M."/>
            <person name="Callen D.F."/>
            <person name="Campbell C.S."/>
            <person name="Campbell M.L."/>
            <person name="Campbell E.W."/>
            <person name="Caoile C."/>
            <person name="Challacombe J.F."/>
            <person name="Chasteen L.A."/>
            <person name="Chertkov O."/>
            <person name="Chi H.C."/>
            <person name="Christensen M."/>
            <person name="Clark L.M."/>
            <person name="Cohn J.D."/>
            <person name="Denys M."/>
            <person name="Detter J.C."/>
            <person name="Dickson M."/>
            <person name="Dimitrijevic-Bussod M."/>
            <person name="Escobar J."/>
            <person name="Fawcett J.J."/>
            <person name="Flowers D."/>
            <person name="Fotopulos D."/>
            <person name="Glavina T."/>
            <person name="Gomez M."/>
            <person name="Gonzales E."/>
            <person name="Goodstein D."/>
            <person name="Goodwin L.A."/>
            <person name="Grady D.L."/>
            <person name="Grigoriev I."/>
            <person name="Groza M."/>
            <person name="Hammon N."/>
            <person name="Hawkins T."/>
            <person name="Haydu L."/>
            <person name="Hildebrand C.E."/>
            <person name="Huang W."/>
            <person name="Israni S."/>
            <person name="Jett J."/>
            <person name="Jewett P.B."/>
            <person name="Kadner K."/>
            <person name="Kimball H."/>
            <person name="Kobayashi A."/>
            <person name="Krawczyk M.-C."/>
            <person name="Leyba T."/>
            <person name="Longmire J.L."/>
            <person name="Lopez F."/>
            <person name="Lou Y."/>
            <person name="Lowry S."/>
            <person name="Ludeman T."/>
            <person name="Manohar C.F."/>
            <person name="Mark G.A."/>
            <person name="McMurray K.L."/>
            <person name="Meincke L.J."/>
            <person name="Morgan J."/>
            <person name="Moyzis R.K."/>
            <person name="Mundt M.O."/>
            <person name="Munk A.C."/>
            <person name="Nandkeshwar R.D."/>
            <person name="Pitluck S."/>
            <person name="Pollard M."/>
            <person name="Predki P."/>
            <person name="Parson-Quintana B."/>
            <person name="Ramirez L."/>
            <person name="Rash S."/>
            <person name="Retterer J."/>
            <person name="Ricke D.O."/>
            <person name="Robinson D.L."/>
            <person name="Rodriguez A."/>
            <person name="Salamov A."/>
            <person name="Saunders E.H."/>
            <person name="Scott D."/>
            <person name="Shough T."/>
            <person name="Stallings R.L."/>
            <person name="Stalvey M."/>
            <person name="Sutherland R.D."/>
            <person name="Tapia R."/>
            <person name="Tesmer J.G."/>
            <person name="Thayer N."/>
            <person name="Thompson L.S."/>
            <person name="Tice H."/>
            <person name="Torney D.C."/>
            <person name="Tran-Gyamfi M."/>
            <person name="Tsai M."/>
            <person name="Ulanovsky L.E."/>
            <person name="Ustaszewska A."/>
            <person name="Vo N."/>
            <person name="White P.S."/>
            <person name="Williams A.L."/>
            <person name="Wills P.L."/>
            <person name="Wu J.-R."/>
            <person name="Wu K."/>
            <person name="Yang J."/>
            <person name="DeJong P."/>
            <person name="Bruce D."/>
            <person name="Doggett N.A."/>
            <person name="Deaven L."/>
            <person name="Schmutz J."/>
            <person name="Grimwood J."/>
            <person name="Richardson P."/>
            <person name="Rokhsar D.S."/>
            <person name="Eichler E.E."/>
            <person name="Gilna P."/>
            <person name="Lucas S.M."/>
            <person name="Myers R.M."/>
            <person name="Rubin E.M."/>
            <person name="Pennacchio L.A."/>
        </authorList>
    </citation>
    <scope>NUCLEOTIDE SEQUENCE [LARGE SCALE GENOMIC DNA]</scope>
</reference>
<reference key="2">
    <citation type="journal article" date="2003" name="Nat. Rev. Genet.">
        <title>Human and mouse proteases: a comparative genomic approach.</title>
        <authorList>
            <person name="Puente X.S."/>
            <person name="Sanchez L.M."/>
            <person name="Overall C.M."/>
            <person name="Lopez-Otin C."/>
        </authorList>
    </citation>
    <scope>IDENTIFICATION</scope>
</reference>
<reference key="3">
    <citation type="journal article" date="2010" name="Am. J. Hum. Genet.">
        <title>A focal epilepsy and intellectual disability syndrome is due to a mutation in TBC1D24.</title>
        <authorList>
            <person name="Corbett M.A."/>
            <person name="Bahlo M."/>
            <person name="Jolly L."/>
            <person name="Afawi Z."/>
            <person name="Gardner A.E."/>
            <person name="Oliver K.L."/>
            <person name="Tan S."/>
            <person name="Coffey A."/>
            <person name="Mulley J.C."/>
            <person name="Dibbens L.M."/>
            <person name="Simri W."/>
            <person name="Shalata A."/>
            <person name="Kivity S."/>
            <person name="Jackson G.D."/>
            <person name="Berkovic S.F."/>
            <person name="Gecz J."/>
        </authorList>
    </citation>
    <scope>VARIANT GLY-286</scope>
</reference>
<feature type="signal peptide" evidence="2">
    <location>
        <begin position="1"/>
        <end position="19"/>
    </location>
</feature>
<feature type="propeptide" id="PRO_0000345420" evidence="2">
    <location>
        <begin position="20"/>
        <end position="54"/>
    </location>
</feature>
<feature type="chain" id="PRO_5000095968" description="Serine protease 41">
    <location>
        <begin position="55"/>
        <end position="299"/>
    </location>
</feature>
<feature type="propeptide" id="PRO_0000345421" description="Removed in mature form" evidence="2">
    <location>
        <begin position="300"/>
        <end position="318"/>
    </location>
</feature>
<feature type="domain" description="Peptidase S1" evidence="3">
    <location>
        <begin position="55"/>
        <end position="297"/>
    </location>
</feature>
<feature type="active site" description="Charge relay system" evidence="1">
    <location>
        <position position="95"/>
    </location>
</feature>
<feature type="active site" description="Charge relay system" evidence="1">
    <location>
        <position position="147"/>
    </location>
</feature>
<feature type="active site" description="Charge relay system" evidence="1">
    <location>
        <position position="249"/>
    </location>
</feature>
<feature type="lipid moiety-binding region" description="GPI-anchor amidated serine" evidence="1">
    <location>
        <position position="299"/>
    </location>
</feature>
<feature type="glycosylation site" description="N-linked (GlcNAc...) asparagine" evidence="2">
    <location>
        <position position="211"/>
    </location>
</feature>
<feature type="glycosylation site" description="N-linked (GlcNAc...) asparagine" evidence="2">
    <location>
        <position position="284"/>
    </location>
</feature>
<feature type="disulfide bond" evidence="3">
    <location>
        <begin position="80"/>
        <end position="96"/>
    </location>
</feature>
<feature type="disulfide bond" evidence="3">
    <location>
        <begin position="181"/>
        <end position="255"/>
    </location>
</feature>
<feature type="disulfide bond" evidence="3">
    <location>
        <begin position="215"/>
        <end position="234"/>
    </location>
</feature>
<feature type="disulfide bond" evidence="3">
    <location>
        <begin position="245"/>
        <end position="273"/>
    </location>
</feature>
<feature type="sequence variant" id="VAR_064369" description="In dbSNP:rs746540699." evidence="4">
    <original>S</original>
    <variation>G</variation>
    <location>
        <position position="286"/>
    </location>
</feature>
<proteinExistence type="evidence at protein level"/>
<organism>
    <name type="scientific">Homo sapiens</name>
    <name type="common">Human</name>
    <dbReference type="NCBI Taxonomy" id="9606"/>
    <lineage>
        <taxon>Eukaryota</taxon>
        <taxon>Metazoa</taxon>
        <taxon>Chordata</taxon>
        <taxon>Craniata</taxon>
        <taxon>Vertebrata</taxon>
        <taxon>Euteleostomi</taxon>
        <taxon>Mammalia</taxon>
        <taxon>Eutheria</taxon>
        <taxon>Euarchontoglires</taxon>
        <taxon>Primates</taxon>
        <taxon>Haplorrhini</taxon>
        <taxon>Catarrhini</taxon>
        <taxon>Hominidae</taxon>
        <taxon>Homo</taxon>
    </lineage>
</organism>